<reference key="1">
    <citation type="journal article" date="2006" name="Genome Res.">
        <title>Skewed genomic variability in strains of the toxigenic bacterial pathogen, Clostridium perfringens.</title>
        <authorList>
            <person name="Myers G.S.A."/>
            <person name="Rasko D.A."/>
            <person name="Cheung J.K."/>
            <person name="Ravel J."/>
            <person name="Seshadri R."/>
            <person name="DeBoy R.T."/>
            <person name="Ren Q."/>
            <person name="Varga J."/>
            <person name="Awad M.M."/>
            <person name="Brinkac L.M."/>
            <person name="Daugherty S.C."/>
            <person name="Haft D.H."/>
            <person name="Dodson R.J."/>
            <person name="Madupu R."/>
            <person name="Nelson W.C."/>
            <person name="Rosovitz M.J."/>
            <person name="Sullivan S.A."/>
            <person name="Khouri H."/>
            <person name="Dimitrov G.I."/>
            <person name="Watkins K.L."/>
            <person name="Mulligan S."/>
            <person name="Benton J."/>
            <person name="Radune D."/>
            <person name="Fisher D.J."/>
            <person name="Atkins H.S."/>
            <person name="Hiscox T."/>
            <person name="Jost B.H."/>
            <person name="Billington S.J."/>
            <person name="Songer J.G."/>
            <person name="McClane B.A."/>
            <person name="Titball R.W."/>
            <person name="Rood J.I."/>
            <person name="Melville S.B."/>
            <person name="Paulsen I.T."/>
        </authorList>
    </citation>
    <scope>NUCLEOTIDE SEQUENCE [LARGE SCALE GENOMIC DNA]</scope>
    <source>
        <strain>ATCC 13124 / DSM 756 / JCM 1290 / NCIMB 6125 / NCTC 8237 / S 107 / Type A</strain>
    </source>
</reference>
<sequence length="283" mass="33007">MELWYTEEHTDKVRFSIKVDEQLYSGKSDFQRIDVFKSQEFGTFFTLDGLMMVTEKDEFIYHDMIVHVPMATNPNIKNVLVIGAGDGGTVRELTRYETIEKIDMVEIDKLVVDVCREYLPQTANKLDDPRVSLFFEDGLKFVRSVENKYDLIIVDSTDPFGPGEGLFTREFYGNCFKALKEDGILVNQHESPYYEEYARGMKRAHKRIKECFPVCRVYQAHIPTYPSGHWLFGFASKKYDPLNADIEKWNDLGLKTKYYNTELHKGCFALPNYVKEMLENVDE</sequence>
<evidence type="ECO:0000255" key="1">
    <source>
        <dbReference type="HAMAP-Rule" id="MF_00198"/>
    </source>
</evidence>
<dbReference type="EC" id="2.5.1.16" evidence="1"/>
<dbReference type="EMBL" id="CP000246">
    <property type="protein sequence ID" value="ABG83476.1"/>
    <property type="molecule type" value="Genomic_DNA"/>
</dbReference>
<dbReference type="RefSeq" id="WP_003455287.1">
    <property type="nucleotide sequence ID" value="NC_008261.1"/>
</dbReference>
<dbReference type="SMR" id="Q0TTQ7"/>
<dbReference type="STRING" id="195103.CPF_0529"/>
<dbReference type="PaxDb" id="195103-CPF_0529"/>
<dbReference type="KEGG" id="cpf:CPF_0529"/>
<dbReference type="eggNOG" id="COG0421">
    <property type="taxonomic scope" value="Bacteria"/>
</dbReference>
<dbReference type="HOGENOM" id="CLU_048199_0_0_9"/>
<dbReference type="UniPathway" id="UPA00248">
    <property type="reaction ID" value="UER00314"/>
</dbReference>
<dbReference type="Proteomes" id="UP000001823">
    <property type="component" value="Chromosome"/>
</dbReference>
<dbReference type="GO" id="GO:0005829">
    <property type="term" value="C:cytosol"/>
    <property type="evidence" value="ECO:0007669"/>
    <property type="project" value="TreeGrafter"/>
</dbReference>
<dbReference type="GO" id="GO:0004766">
    <property type="term" value="F:spermidine synthase activity"/>
    <property type="evidence" value="ECO:0007669"/>
    <property type="project" value="UniProtKB-UniRule"/>
</dbReference>
<dbReference type="GO" id="GO:0008295">
    <property type="term" value="P:spermidine biosynthetic process"/>
    <property type="evidence" value="ECO:0007669"/>
    <property type="project" value="UniProtKB-UniRule"/>
</dbReference>
<dbReference type="CDD" id="cd02440">
    <property type="entry name" value="AdoMet_MTases"/>
    <property type="match status" value="1"/>
</dbReference>
<dbReference type="Gene3D" id="2.30.140.10">
    <property type="entry name" value="Spermidine synthase, tetramerisation domain"/>
    <property type="match status" value="1"/>
</dbReference>
<dbReference type="Gene3D" id="3.40.50.150">
    <property type="entry name" value="Vaccinia Virus protein VP39"/>
    <property type="match status" value="1"/>
</dbReference>
<dbReference type="HAMAP" id="MF_00198">
    <property type="entry name" value="Spermidine_synth"/>
    <property type="match status" value="1"/>
</dbReference>
<dbReference type="InterPro" id="IPR030374">
    <property type="entry name" value="PABS"/>
</dbReference>
<dbReference type="InterPro" id="IPR029063">
    <property type="entry name" value="SAM-dependent_MTases_sf"/>
</dbReference>
<dbReference type="InterPro" id="IPR001045">
    <property type="entry name" value="Spermi_synthase"/>
</dbReference>
<dbReference type="InterPro" id="IPR035246">
    <property type="entry name" value="Spermidine_synt_N"/>
</dbReference>
<dbReference type="InterPro" id="IPR037163">
    <property type="entry name" value="Spermidine_synt_N_sf"/>
</dbReference>
<dbReference type="NCBIfam" id="NF002010">
    <property type="entry name" value="PRK00811.1"/>
    <property type="match status" value="1"/>
</dbReference>
<dbReference type="NCBIfam" id="TIGR00417">
    <property type="entry name" value="speE"/>
    <property type="match status" value="1"/>
</dbReference>
<dbReference type="PANTHER" id="PTHR11558:SF11">
    <property type="entry name" value="SPERMIDINE SYNTHASE"/>
    <property type="match status" value="1"/>
</dbReference>
<dbReference type="PANTHER" id="PTHR11558">
    <property type="entry name" value="SPERMIDINE/SPERMINE SYNTHASE"/>
    <property type="match status" value="1"/>
</dbReference>
<dbReference type="Pfam" id="PF17284">
    <property type="entry name" value="Spermine_synt_N"/>
    <property type="match status" value="1"/>
</dbReference>
<dbReference type="Pfam" id="PF01564">
    <property type="entry name" value="Spermine_synth"/>
    <property type="match status" value="1"/>
</dbReference>
<dbReference type="SUPFAM" id="SSF53335">
    <property type="entry name" value="S-adenosyl-L-methionine-dependent methyltransferases"/>
    <property type="match status" value="1"/>
</dbReference>
<dbReference type="PROSITE" id="PS51006">
    <property type="entry name" value="PABS_2"/>
    <property type="match status" value="1"/>
</dbReference>
<gene>
    <name evidence="1" type="primary">speE</name>
    <name type="ordered locus">CPF_0529</name>
</gene>
<feature type="chain" id="PRO_1000011995" description="Polyamine aminopropyltransferase">
    <location>
        <begin position="1"/>
        <end position="283"/>
    </location>
</feature>
<feature type="domain" description="PABS" evidence="1">
    <location>
        <begin position="2"/>
        <end position="237"/>
    </location>
</feature>
<feature type="active site" description="Proton acceptor" evidence="1">
    <location>
        <position position="155"/>
    </location>
</feature>
<feature type="binding site" evidence="1">
    <location>
        <position position="31"/>
    </location>
    <ligand>
        <name>S-methyl-5'-thioadenosine</name>
        <dbReference type="ChEBI" id="CHEBI:17509"/>
    </ligand>
</feature>
<feature type="binding site" evidence="1">
    <location>
        <position position="62"/>
    </location>
    <ligand>
        <name>spermidine</name>
        <dbReference type="ChEBI" id="CHEBI:57834"/>
    </ligand>
</feature>
<feature type="binding site" evidence="1">
    <location>
        <position position="86"/>
    </location>
    <ligand>
        <name>spermidine</name>
        <dbReference type="ChEBI" id="CHEBI:57834"/>
    </ligand>
</feature>
<feature type="binding site" evidence="1">
    <location>
        <position position="106"/>
    </location>
    <ligand>
        <name>S-methyl-5'-thioadenosine</name>
        <dbReference type="ChEBI" id="CHEBI:17509"/>
    </ligand>
</feature>
<feature type="binding site" evidence="1">
    <location>
        <begin position="137"/>
        <end position="138"/>
    </location>
    <ligand>
        <name>S-methyl-5'-thioadenosine</name>
        <dbReference type="ChEBI" id="CHEBI:17509"/>
    </ligand>
</feature>
<feature type="binding site" evidence="1">
    <location>
        <begin position="155"/>
        <end position="158"/>
    </location>
    <ligand>
        <name>spermidine</name>
        <dbReference type="ChEBI" id="CHEBI:57834"/>
    </ligand>
</feature>
<feature type="binding site" evidence="1">
    <location>
        <position position="162"/>
    </location>
    <ligand>
        <name>S-methyl-5'-thioadenosine</name>
        <dbReference type="ChEBI" id="CHEBI:17509"/>
    </ligand>
</feature>
<protein>
    <recommendedName>
        <fullName evidence="1">Polyamine aminopropyltransferase</fullName>
    </recommendedName>
    <alternativeName>
        <fullName evidence="1">Putrescine aminopropyltransferase</fullName>
        <shortName evidence="1">PAPT</shortName>
    </alternativeName>
    <alternativeName>
        <fullName evidence="1">Spermidine synthase</fullName>
        <shortName evidence="1">SPDS</shortName>
        <shortName evidence="1">SPDSY</shortName>
        <ecNumber evidence="1">2.5.1.16</ecNumber>
    </alternativeName>
</protein>
<comment type="function">
    <text evidence="1">Catalyzes the irreversible transfer of a propylamine group from the amino donor S-adenosylmethioninamine (decarboxy-AdoMet) to putrescine (1,4-diaminobutane) to yield spermidine.</text>
</comment>
<comment type="catalytic activity">
    <reaction evidence="1">
        <text>S-adenosyl 3-(methylsulfanyl)propylamine + putrescine = S-methyl-5'-thioadenosine + spermidine + H(+)</text>
        <dbReference type="Rhea" id="RHEA:12721"/>
        <dbReference type="ChEBI" id="CHEBI:15378"/>
        <dbReference type="ChEBI" id="CHEBI:17509"/>
        <dbReference type="ChEBI" id="CHEBI:57443"/>
        <dbReference type="ChEBI" id="CHEBI:57834"/>
        <dbReference type="ChEBI" id="CHEBI:326268"/>
        <dbReference type="EC" id="2.5.1.16"/>
    </reaction>
</comment>
<comment type="pathway">
    <text evidence="1">Amine and polyamine biosynthesis; spermidine biosynthesis; spermidine from putrescine: step 1/1.</text>
</comment>
<comment type="subunit">
    <text evidence="1">Homodimer or homotetramer.</text>
</comment>
<comment type="subcellular location">
    <subcellularLocation>
        <location evidence="1">Cytoplasm</location>
    </subcellularLocation>
</comment>
<comment type="similarity">
    <text evidence="1">Belongs to the spermidine/spermine synthase family.</text>
</comment>
<organism>
    <name type="scientific">Clostridium perfringens (strain ATCC 13124 / DSM 756 / JCM 1290 / NCIMB 6125 / NCTC 8237 / Type A)</name>
    <dbReference type="NCBI Taxonomy" id="195103"/>
    <lineage>
        <taxon>Bacteria</taxon>
        <taxon>Bacillati</taxon>
        <taxon>Bacillota</taxon>
        <taxon>Clostridia</taxon>
        <taxon>Eubacteriales</taxon>
        <taxon>Clostridiaceae</taxon>
        <taxon>Clostridium</taxon>
    </lineage>
</organism>
<proteinExistence type="inferred from homology"/>
<keyword id="KW-0963">Cytoplasm</keyword>
<keyword id="KW-0620">Polyamine biosynthesis</keyword>
<keyword id="KW-0745">Spermidine biosynthesis</keyword>
<keyword id="KW-0808">Transferase</keyword>
<name>SPEE_CLOP1</name>
<accession>Q0TTQ7</accession>